<organism>
    <name type="scientific">Danio rerio</name>
    <name type="common">Zebrafish</name>
    <name type="synonym">Brachydanio rerio</name>
    <dbReference type="NCBI Taxonomy" id="7955"/>
    <lineage>
        <taxon>Eukaryota</taxon>
        <taxon>Metazoa</taxon>
        <taxon>Chordata</taxon>
        <taxon>Craniata</taxon>
        <taxon>Vertebrata</taxon>
        <taxon>Euteleostomi</taxon>
        <taxon>Actinopterygii</taxon>
        <taxon>Neopterygii</taxon>
        <taxon>Teleostei</taxon>
        <taxon>Ostariophysi</taxon>
        <taxon>Cypriniformes</taxon>
        <taxon>Danionidae</taxon>
        <taxon>Danioninae</taxon>
        <taxon>Danio</taxon>
    </lineage>
</organism>
<feature type="chain" id="PRO_0000360982" description="Cilia- and flagella-associated protein 161">
    <location>
        <begin position="1"/>
        <end position="301"/>
    </location>
</feature>
<comment type="function">
    <text evidence="5">Microtubule inner protein (MIP) part of the dynein-decorated doublet microtubules (DMTs) in cilia axoneme, which is required for motile cilia beating.</text>
</comment>
<comment type="subcellular location">
    <subcellularLocation>
        <location evidence="1">Cytoplasm</location>
        <location evidence="1">Cytoskeleton</location>
        <location evidence="1">Cilium axoneme</location>
    </subcellularLocation>
</comment>
<comment type="disruption phenotype">
    <text evidence="3">Morpholino knockdown of the protein causes strong ciliopathy phenotypes, including pronephric cysts, axis curvature, left-right asymmetry defects and hydrocephalus. Cilia length and number appear normal, but outer dynein arms are missing and cilia are paralyzed.</text>
</comment>
<keyword id="KW-0966">Cell projection</keyword>
<keyword id="KW-0963">Cytoplasm</keyword>
<keyword id="KW-0206">Cytoskeleton</keyword>
<keyword id="KW-1185">Reference proteome</keyword>
<sequence length="301" mass="33838">MAHVRTYNPRVRVGNWKEDVTLEEETSKEFILQKDRGELTVQKEGALKQSILKPVSLSVSQDGFLHFGDTVMLVNCGDGGHMQRSPCVLSIIADSSNVTSHSQTNTGPHLLGPLQVGGAHSMDPCVRNTFIIISVDGSSDGEVVRYDQSFALKTTGGFAGELFLASDHKSFQKCAKKSRLQELSLVEEFDFLCWWKVLYFDPQDRLENEGYPVQVNNKVLISHCKTNQCLAALSNHILWSQFGKEYELTAHTFLDSHKAEQDNNHWLFSTAHPANQSQSLLQLQQEEHKENQEDTQVKDCS</sequence>
<dbReference type="EMBL" id="BC092905">
    <property type="protein sequence ID" value="AAH92905.1"/>
    <property type="molecule type" value="mRNA"/>
</dbReference>
<dbReference type="RefSeq" id="NP_001017774.1">
    <property type="nucleotide sequence ID" value="NM_001017774.1"/>
</dbReference>
<dbReference type="SMR" id="Q568D2"/>
<dbReference type="FunCoup" id="Q568D2">
    <property type="interactions" value="195"/>
</dbReference>
<dbReference type="STRING" id="7955.ENSDARP00000011815"/>
<dbReference type="PaxDb" id="7955-ENSDARP00000011815"/>
<dbReference type="GeneID" id="550471"/>
<dbReference type="KEGG" id="dre:550471"/>
<dbReference type="AGR" id="ZFIN:ZDB-GENE-050417-296"/>
<dbReference type="CTD" id="161502"/>
<dbReference type="ZFIN" id="ZDB-GENE-050417-296">
    <property type="gene designation" value="cfap161"/>
</dbReference>
<dbReference type="eggNOG" id="ENOG502QRDA">
    <property type="taxonomic scope" value="Eukaryota"/>
</dbReference>
<dbReference type="InParanoid" id="Q568D2"/>
<dbReference type="OrthoDB" id="2126411at2759"/>
<dbReference type="PhylomeDB" id="Q568D2"/>
<dbReference type="PRO" id="PR:Q568D2"/>
<dbReference type="Proteomes" id="UP000000437">
    <property type="component" value="Chromosome 18"/>
</dbReference>
<dbReference type="GO" id="GO:0005879">
    <property type="term" value="C:axonemal microtubule"/>
    <property type="evidence" value="ECO:0000250"/>
    <property type="project" value="UniProtKB"/>
</dbReference>
<dbReference type="GO" id="GO:0031514">
    <property type="term" value="C:motile cilium"/>
    <property type="evidence" value="ECO:0000314"/>
    <property type="project" value="ZFIN"/>
</dbReference>
<dbReference type="GO" id="GO:0060271">
    <property type="term" value="P:cilium assembly"/>
    <property type="evidence" value="ECO:0000315"/>
    <property type="project" value="ZFIN"/>
</dbReference>
<dbReference type="InterPro" id="IPR055325">
    <property type="entry name" value="CF161"/>
</dbReference>
<dbReference type="PANTHER" id="PTHR24274">
    <property type="entry name" value="CILIA- AND FLAGELLA-ASSOCIATED PROTEIN 161"/>
    <property type="match status" value="1"/>
</dbReference>
<dbReference type="PANTHER" id="PTHR24274:SF1">
    <property type="entry name" value="CILIA- AND FLAGELLA-ASSOCIATED PROTEIN 161"/>
    <property type="match status" value="1"/>
</dbReference>
<dbReference type="Pfam" id="PF24569">
    <property type="entry name" value="CFAP161"/>
    <property type="match status" value="1"/>
</dbReference>
<name>CF161_DANRE</name>
<protein>
    <recommendedName>
        <fullName evidence="2">Cilia- and flagella-associated protein 161</fullName>
    </recommendedName>
</protein>
<reference key="1">
    <citation type="submission" date="2005-04" db="EMBL/GenBank/DDBJ databases">
        <authorList>
            <consortium name="NIH - Zebrafish Gene Collection (ZGC) project"/>
        </authorList>
    </citation>
    <scope>NUCLEOTIDE SEQUENCE [LARGE SCALE MRNA]</scope>
    <source>
        <tissue>Olfactory epithelium</tissue>
    </source>
</reference>
<reference key="2">
    <citation type="journal article" date="2013" name="Am. J. Hum. Genet.">
        <title>Zebrafish ciliopathy screen plus human mutational analysis identifies C21orf59 and CCDC65 defects as causing primary ciliary dyskinesia.</title>
        <authorList>
            <person name="Austin-Tse C."/>
            <person name="Halbritter J."/>
            <person name="Zariwala M.A."/>
            <person name="Gilberti R.M."/>
            <person name="Gee H.Y."/>
            <person name="Hellman N."/>
            <person name="Pathak N."/>
            <person name="Liu Y."/>
            <person name="Panizzi J.R."/>
            <person name="Patel-King R.S."/>
            <person name="Tritschler D."/>
            <person name="Bower R."/>
            <person name="O'Toole E."/>
            <person name="Porath J.D."/>
            <person name="Hurd T.W."/>
            <person name="Chaki M."/>
            <person name="Diaz K.A."/>
            <person name="Kohl S."/>
            <person name="Lovric S."/>
            <person name="Hwang D.Y."/>
            <person name="Braun D.A."/>
            <person name="Schueler M."/>
            <person name="Airik R."/>
            <person name="Otto E.A."/>
            <person name="Leigh M.W."/>
            <person name="Noone P.G."/>
            <person name="Carson J.L."/>
            <person name="Davis S.D."/>
            <person name="Pittman J.E."/>
            <person name="Ferkol T.W."/>
            <person name="Atkinson J.J."/>
            <person name="Olivier K.N."/>
            <person name="Sagel S.D."/>
            <person name="Dell S.D."/>
            <person name="Rosenfeld M."/>
            <person name="Milla C.E."/>
            <person name="Loges N.T."/>
            <person name="Omran H."/>
            <person name="Porter M.E."/>
            <person name="King S.M."/>
            <person name="Knowles M.R."/>
            <person name="Drummond I.A."/>
            <person name="Hildebrandt F."/>
        </authorList>
    </citation>
    <scope>FUNCTION</scope>
    <scope>DISRUPTION PHENOTYPE</scope>
</reference>
<evidence type="ECO:0000250" key="1">
    <source>
        <dbReference type="UniProtKB" id="F6RJC2"/>
    </source>
</evidence>
<evidence type="ECO:0000250" key="2">
    <source>
        <dbReference type="UniProtKB" id="Q6P656"/>
    </source>
</evidence>
<evidence type="ECO:0000269" key="3">
    <source>
    </source>
</evidence>
<evidence type="ECO:0000305" key="4"/>
<evidence type="ECO:0000305" key="5">
    <source>
    </source>
</evidence>
<accession>Q568D2</accession>
<gene>
    <name evidence="2" type="primary">cfap161</name>
    <name evidence="4" type="ORF">zgc:110373</name>
</gene>
<proteinExistence type="evidence at transcript level"/>